<protein>
    <recommendedName>
        <fullName>Polyketide synthase-like Pks10</fullName>
        <ecNumber>2.3.1.-</ecNumber>
    </recommendedName>
    <alternativeName>
        <fullName>Chalcone synthase-like protein</fullName>
        <shortName>CHS-like</shortName>
    </alternativeName>
    <alternativeName>
        <fullName>Polyketide synthase type III Pks10</fullName>
    </alternativeName>
</protein>
<dbReference type="EC" id="2.3.1.-"/>
<dbReference type="EMBL" id="LT708304">
    <property type="protein sequence ID" value="SIU00291.1"/>
    <property type="molecule type" value="Genomic_DNA"/>
</dbReference>
<dbReference type="RefSeq" id="NP_855340.1">
    <property type="nucleotide sequence ID" value="NC_002945.3"/>
</dbReference>
<dbReference type="RefSeq" id="WP_003408181.1">
    <property type="nucleotide sequence ID" value="NC_002945.4"/>
</dbReference>
<dbReference type="SMR" id="Q7VEV2"/>
<dbReference type="KEGG" id="mbo:BQ2027_MB1688"/>
<dbReference type="PATRIC" id="fig|233413.5.peg.1841"/>
<dbReference type="UniPathway" id="UPA00094"/>
<dbReference type="Proteomes" id="UP000001419">
    <property type="component" value="Chromosome"/>
</dbReference>
<dbReference type="GO" id="GO:0016747">
    <property type="term" value="F:acyltransferase activity, transferring groups other than amino-acyl groups"/>
    <property type="evidence" value="ECO:0007669"/>
    <property type="project" value="InterPro"/>
</dbReference>
<dbReference type="GO" id="GO:0006633">
    <property type="term" value="P:fatty acid biosynthetic process"/>
    <property type="evidence" value="ECO:0007669"/>
    <property type="project" value="UniProtKB-UniPathway"/>
</dbReference>
<dbReference type="GO" id="GO:0030639">
    <property type="term" value="P:polyketide biosynthetic process"/>
    <property type="evidence" value="ECO:0007669"/>
    <property type="project" value="TreeGrafter"/>
</dbReference>
<dbReference type="CDD" id="cd00831">
    <property type="entry name" value="CHS_like"/>
    <property type="match status" value="1"/>
</dbReference>
<dbReference type="FunFam" id="3.40.47.10:FF:000053">
    <property type="entry name" value="Alpha-pyrone synthesis polyketide synthase"/>
    <property type="match status" value="1"/>
</dbReference>
<dbReference type="FunFam" id="3.40.47.10:FF:000014">
    <property type="entry name" value="Chalcone synthase 1"/>
    <property type="match status" value="1"/>
</dbReference>
<dbReference type="Gene3D" id="3.40.47.10">
    <property type="match status" value="2"/>
</dbReference>
<dbReference type="InterPro" id="IPR012328">
    <property type="entry name" value="Chalcone/stilbene_synt_C"/>
</dbReference>
<dbReference type="InterPro" id="IPR001099">
    <property type="entry name" value="Chalcone/stilbene_synt_N"/>
</dbReference>
<dbReference type="InterPro" id="IPR011141">
    <property type="entry name" value="Polyketide_synthase_type-III"/>
</dbReference>
<dbReference type="InterPro" id="IPR016039">
    <property type="entry name" value="Thiolase-like"/>
</dbReference>
<dbReference type="PANTHER" id="PTHR11877:SF99">
    <property type="entry name" value="1,3,6,8-TETRAHYDROXYNAPHTHALENE SYNTHASE"/>
    <property type="match status" value="1"/>
</dbReference>
<dbReference type="PANTHER" id="PTHR11877">
    <property type="entry name" value="HYDROXYMETHYLGLUTARYL-COA SYNTHASE"/>
    <property type="match status" value="1"/>
</dbReference>
<dbReference type="Pfam" id="PF02797">
    <property type="entry name" value="Chal_sti_synt_C"/>
    <property type="match status" value="1"/>
</dbReference>
<dbReference type="Pfam" id="PF00195">
    <property type="entry name" value="Chal_sti_synt_N"/>
    <property type="match status" value="1"/>
</dbReference>
<dbReference type="PIRSF" id="PIRSF000451">
    <property type="entry name" value="PKS_III"/>
    <property type="match status" value="1"/>
</dbReference>
<dbReference type="SUPFAM" id="SSF53901">
    <property type="entry name" value="Thiolase-like"/>
    <property type="match status" value="1"/>
</dbReference>
<sequence>MSVIAGVFGALPPYRYSQRELTDSFVSIPDFEGYEDIVRQLHASAKVNSRHLVLPLEKYPKLTDFGEANKIFIEKAVDLGVQALAGALDESGLRPEDLDVLITATVTGLAVPSLDARIAGRLGLRADVRRVPLFGLGCVAGAAGVARLHDYLRGAPDGVAALVSVELCSLTYPGYKPTLPGLVGSALFADGAAAVVAAGVKRAQDIGADGPDILDSRSHLYPDSLRTMGYDVGSAGFELVLSRDLAAVVEQYLGNDVTTFLASHGLSTTDVGAWVTHPGGPKIINAITETLDLSPQALELTWRSLGEIGNLSSASVLHVLRDTIAKPPPSGSPGLMIAMGPGFCSELVLLRWH</sequence>
<organism>
    <name type="scientific">Mycobacterium bovis (strain ATCC BAA-935 / AF2122/97)</name>
    <dbReference type="NCBI Taxonomy" id="233413"/>
    <lineage>
        <taxon>Bacteria</taxon>
        <taxon>Bacillati</taxon>
        <taxon>Actinomycetota</taxon>
        <taxon>Actinomycetes</taxon>
        <taxon>Mycobacteriales</taxon>
        <taxon>Mycobacteriaceae</taxon>
        <taxon>Mycobacterium</taxon>
        <taxon>Mycobacterium tuberculosis complex</taxon>
    </lineage>
</organism>
<name>PKS10_MYCBO</name>
<gene>
    <name type="primary">pks10</name>
    <name type="ordered locus">BQ2027_MB1688</name>
</gene>
<reference key="1">
    <citation type="journal article" date="2003" name="Proc. Natl. Acad. Sci. U.S.A.">
        <title>The complete genome sequence of Mycobacterium bovis.</title>
        <authorList>
            <person name="Garnier T."/>
            <person name="Eiglmeier K."/>
            <person name="Camus J.-C."/>
            <person name="Medina N."/>
            <person name="Mansoor H."/>
            <person name="Pryor M."/>
            <person name="Duthoy S."/>
            <person name="Grondin S."/>
            <person name="Lacroix C."/>
            <person name="Monsempe C."/>
            <person name="Simon S."/>
            <person name="Harris B."/>
            <person name="Atkin R."/>
            <person name="Doggett J."/>
            <person name="Mayes R."/>
            <person name="Keating L."/>
            <person name="Wheeler P.R."/>
            <person name="Parkhill J."/>
            <person name="Barrell B.G."/>
            <person name="Cole S.T."/>
            <person name="Gordon S.V."/>
            <person name="Hewinson R.G."/>
        </authorList>
    </citation>
    <scope>NUCLEOTIDE SEQUENCE [LARGE SCALE GENOMIC DNA]</scope>
    <source>
        <strain>ATCC BAA-935 / AF2122/97</strain>
    </source>
</reference>
<reference key="2">
    <citation type="journal article" date="2017" name="Genome Announc.">
        <title>Updated reference genome sequence and annotation of Mycobacterium bovis AF2122/97.</title>
        <authorList>
            <person name="Malone K.M."/>
            <person name="Farrell D."/>
            <person name="Stuber T.P."/>
            <person name="Schubert O.T."/>
            <person name="Aebersold R."/>
            <person name="Robbe-Austerman S."/>
            <person name="Gordon S.V."/>
        </authorList>
    </citation>
    <scope>NUCLEOTIDE SEQUENCE [LARGE SCALE GENOMIC DNA]</scope>
    <scope>GENOME REANNOTATION</scope>
    <source>
        <strain>ATCC BAA-935 / AF2122/97</strain>
    </source>
</reference>
<accession>Q7VEV2</accession>
<accession>A0A1R3XYX2</accession>
<accession>X2BIL0</accession>
<feature type="chain" id="PRO_0000407317" description="Polyketide synthase-like Pks10">
    <location>
        <begin position="1"/>
        <end position="353"/>
    </location>
</feature>
<feature type="active site" evidence="1">
    <location>
        <position position="138"/>
    </location>
</feature>
<evidence type="ECO:0000250" key="1"/>
<evidence type="ECO:0000305" key="2"/>
<keyword id="KW-0012">Acyltransferase</keyword>
<keyword id="KW-0276">Fatty acid metabolism</keyword>
<keyword id="KW-0443">Lipid metabolism</keyword>
<keyword id="KW-1185">Reference proteome</keyword>
<keyword id="KW-0808">Transferase</keyword>
<proteinExistence type="inferred from homology"/>
<comment type="function">
    <text evidence="1">Could catalyze the elongation of hydroxybenzoyl-CoA as well as elongation of the aliphatic precursor involved in the synthesis of phthiocerol dimycocerosate (DIM).</text>
</comment>
<comment type="pathway">
    <text>Lipid metabolism; fatty acid biosynthesis.</text>
</comment>
<comment type="subunit">
    <text evidence="1">Homodimer.</text>
</comment>
<comment type="similarity">
    <text evidence="2">Belongs to the thiolase-like superfamily. Chalcone/stilbene synthases family.</text>
</comment>